<keyword id="KW-0687">Ribonucleoprotein</keyword>
<keyword id="KW-0689">Ribosomal protein</keyword>
<protein>
    <recommendedName>
        <fullName evidence="1">Large ribosomal subunit protein bL33</fullName>
    </recommendedName>
    <alternativeName>
        <fullName evidence="2">50S ribosomal protein L33</fullName>
    </alternativeName>
</protein>
<reference key="1">
    <citation type="journal article" date="2007" name="PLoS Genet.">
        <title>Patterns and implications of gene gain and loss in the evolution of Prochlorococcus.</title>
        <authorList>
            <person name="Kettler G.C."/>
            <person name="Martiny A.C."/>
            <person name="Huang K."/>
            <person name="Zucker J."/>
            <person name="Coleman M.L."/>
            <person name="Rodrigue S."/>
            <person name="Chen F."/>
            <person name="Lapidus A."/>
            <person name="Ferriera S."/>
            <person name="Johnson J."/>
            <person name="Steglich C."/>
            <person name="Church G.M."/>
            <person name="Richardson P."/>
            <person name="Chisholm S.W."/>
        </authorList>
    </citation>
    <scope>NUCLEOTIDE SEQUENCE [LARGE SCALE GENOMIC DNA]</scope>
    <source>
        <strain>MIT 9303</strain>
    </source>
</reference>
<dbReference type="EMBL" id="CP000554">
    <property type="protein sequence ID" value="ABM78225.1"/>
    <property type="molecule type" value="Genomic_DNA"/>
</dbReference>
<dbReference type="RefSeq" id="WP_011826119.1">
    <property type="nucleotide sequence ID" value="NC_008820.1"/>
</dbReference>
<dbReference type="STRING" id="59922.P9303_14791"/>
<dbReference type="KEGG" id="pmf:P9303_14791"/>
<dbReference type="HOGENOM" id="CLU_190949_3_0_3"/>
<dbReference type="BioCyc" id="PMAR59922:G1G80-1278-MONOMER"/>
<dbReference type="Proteomes" id="UP000002274">
    <property type="component" value="Chromosome"/>
</dbReference>
<dbReference type="GO" id="GO:0005737">
    <property type="term" value="C:cytoplasm"/>
    <property type="evidence" value="ECO:0007669"/>
    <property type="project" value="UniProtKB-ARBA"/>
</dbReference>
<dbReference type="GO" id="GO:1990904">
    <property type="term" value="C:ribonucleoprotein complex"/>
    <property type="evidence" value="ECO:0007669"/>
    <property type="project" value="UniProtKB-KW"/>
</dbReference>
<dbReference type="GO" id="GO:0005840">
    <property type="term" value="C:ribosome"/>
    <property type="evidence" value="ECO:0007669"/>
    <property type="project" value="UniProtKB-KW"/>
</dbReference>
<dbReference type="GO" id="GO:0003735">
    <property type="term" value="F:structural constituent of ribosome"/>
    <property type="evidence" value="ECO:0007669"/>
    <property type="project" value="InterPro"/>
</dbReference>
<dbReference type="GO" id="GO:0006412">
    <property type="term" value="P:translation"/>
    <property type="evidence" value="ECO:0007669"/>
    <property type="project" value="UniProtKB-UniRule"/>
</dbReference>
<dbReference type="Gene3D" id="2.20.28.120">
    <property type="entry name" value="Ribosomal protein L33"/>
    <property type="match status" value="1"/>
</dbReference>
<dbReference type="HAMAP" id="MF_00294">
    <property type="entry name" value="Ribosomal_bL33"/>
    <property type="match status" value="1"/>
</dbReference>
<dbReference type="InterPro" id="IPR001705">
    <property type="entry name" value="Ribosomal_bL33"/>
</dbReference>
<dbReference type="InterPro" id="IPR018264">
    <property type="entry name" value="Ribosomal_bL33_CS"/>
</dbReference>
<dbReference type="InterPro" id="IPR038584">
    <property type="entry name" value="Ribosomal_bL33_sf"/>
</dbReference>
<dbReference type="InterPro" id="IPR011332">
    <property type="entry name" value="Ribosomal_zn-bd"/>
</dbReference>
<dbReference type="NCBIfam" id="NF001764">
    <property type="entry name" value="PRK00504.1"/>
    <property type="match status" value="1"/>
</dbReference>
<dbReference type="NCBIfam" id="NF001860">
    <property type="entry name" value="PRK00595.1"/>
    <property type="match status" value="1"/>
</dbReference>
<dbReference type="NCBIfam" id="TIGR01023">
    <property type="entry name" value="rpmG_bact"/>
    <property type="match status" value="1"/>
</dbReference>
<dbReference type="PANTHER" id="PTHR43168">
    <property type="entry name" value="50S RIBOSOMAL PROTEIN L33, CHLOROPLASTIC"/>
    <property type="match status" value="1"/>
</dbReference>
<dbReference type="PANTHER" id="PTHR43168:SF2">
    <property type="entry name" value="LARGE RIBOSOMAL SUBUNIT PROTEIN BL33C"/>
    <property type="match status" value="1"/>
</dbReference>
<dbReference type="Pfam" id="PF00471">
    <property type="entry name" value="Ribosomal_L33"/>
    <property type="match status" value="1"/>
</dbReference>
<dbReference type="SUPFAM" id="SSF57829">
    <property type="entry name" value="Zn-binding ribosomal proteins"/>
    <property type="match status" value="1"/>
</dbReference>
<dbReference type="PROSITE" id="PS00582">
    <property type="entry name" value="RIBOSOMAL_L33"/>
    <property type="match status" value="1"/>
</dbReference>
<proteinExistence type="inferred from homology"/>
<accession>A2C9R5</accession>
<gene>
    <name evidence="1" type="primary">rpmG</name>
    <name evidence="1" type="synonym">rpl33</name>
    <name type="ordered locus">P9303_14791</name>
</gene>
<feature type="chain" id="PRO_1000004179" description="Large ribosomal subunit protein bL33">
    <location>
        <begin position="1"/>
        <end position="66"/>
    </location>
</feature>
<sequence length="66" mass="7786">MAKNKGVRIVITLECNECRSNPAIDKRSHGVSRYTTEKNRRNTTERLEIKKFCRYCNKSTTHKEIK</sequence>
<comment type="similarity">
    <text evidence="1">Belongs to the bacterial ribosomal protein bL33 family.</text>
</comment>
<name>RL33_PROM3</name>
<organism>
    <name type="scientific">Prochlorococcus marinus (strain MIT 9303)</name>
    <dbReference type="NCBI Taxonomy" id="59922"/>
    <lineage>
        <taxon>Bacteria</taxon>
        <taxon>Bacillati</taxon>
        <taxon>Cyanobacteriota</taxon>
        <taxon>Cyanophyceae</taxon>
        <taxon>Synechococcales</taxon>
        <taxon>Prochlorococcaceae</taxon>
        <taxon>Prochlorococcus</taxon>
    </lineage>
</organism>
<evidence type="ECO:0000255" key="1">
    <source>
        <dbReference type="HAMAP-Rule" id="MF_00294"/>
    </source>
</evidence>
<evidence type="ECO:0000305" key="2"/>